<reference key="1">
    <citation type="submission" date="2005-11" db="EMBL/GenBank/DDBJ databases">
        <title>NISC comparative sequencing initiative.</title>
        <authorList>
            <person name="Antonellis A."/>
            <person name="Ayele K."/>
            <person name="Benjamin B."/>
            <person name="Blakesley R.W."/>
            <person name="Boakye A."/>
            <person name="Bouffard G.G."/>
            <person name="Brinkley C."/>
            <person name="Brooks S."/>
            <person name="Chu G."/>
            <person name="Coleman H."/>
            <person name="Engle J."/>
            <person name="Gestole M."/>
            <person name="Greene A."/>
            <person name="Guan X."/>
            <person name="Gupta J."/>
            <person name="Haghighi P."/>
            <person name="Han J."/>
            <person name="Hansen N."/>
            <person name="Ho S.-L."/>
            <person name="Hu P."/>
            <person name="Hunter G."/>
            <person name="Hurle B."/>
            <person name="Idol J.R."/>
            <person name="Kwong P."/>
            <person name="Laric P."/>
            <person name="Larson S."/>
            <person name="Lee-Lin S.-Q."/>
            <person name="Legaspi R."/>
            <person name="Madden M."/>
            <person name="Maduro Q.L."/>
            <person name="Maduro V.B."/>
            <person name="Margulies E.H."/>
            <person name="Masiello C."/>
            <person name="Maskeri B."/>
            <person name="McDowell J."/>
            <person name="Mojidi H.A."/>
            <person name="Mullikin J.C."/>
            <person name="Oestreicher J.S."/>
            <person name="Park M."/>
            <person name="Portnoy M.E."/>
            <person name="Prasad A."/>
            <person name="Puri O."/>
            <person name="Reddix-Dugue N."/>
            <person name="Schandler K."/>
            <person name="Schueler M.G."/>
            <person name="Sison C."/>
            <person name="Stantripop S."/>
            <person name="Stephen E."/>
            <person name="Taye A."/>
            <person name="Thomas J.W."/>
            <person name="Thomas P.J."/>
            <person name="Tsipouri V."/>
            <person name="Ung L."/>
            <person name="Vogt J.L."/>
            <person name="Wetherby K.D."/>
            <person name="Young A."/>
            <person name="Green E.D."/>
        </authorList>
    </citation>
    <scope>NUCLEOTIDE SEQUENCE [LARGE SCALE GENOMIC DNA]</scope>
</reference>
<name>CFTR_MICMU</name>
<organism>
    <name type="scientific">Microcebus murinus</name>
    <name type="common">Gray mouse lemur</name>
    <name type="synonym">Lemur murinus</name>
    <dbReference type="NCBI Taxonomy" id="30608"/>
    <lineage>
        <taxon>Eukaryota</taxon>
        <taxon>Metazoa</taxon>
        <taxon>Chordata</taxon>
        <taxon>Craniata</taxon>
        <taxon>Vertebrata</taxon>
        <taxon>Euteleostomi</taxon>
        <taxon>Mammalia</taxon>
        <taxon>Eutheria</taxon>
        <taxon>Euarchontoglires</taxon>
        <taxon>Primates</taxon>
        <taxon>Strepsirrhini</taxon>
        <taxon>Lemuriformes</taxon>
        <taxon>Cheirogaleidae</taxon>
        <taxon>Microcebus</taxon>
    </lineage>
</organism>
<sequence>MQRSPLEKASVLSKLFFSWTRPILRKGYRQRLELSDIYQIPSADSADNLSEKLEREWDRELASKKNPKLINALRRCFFWRFMFYGILLYLGEVTKAVQPLLLGRIIASYDPDNKVERSIAIYLGIGLCLLFIVRMLLLHPAIFGLHHIGMQMRIAMFSLIYKKILKLSSRVLDKISIGQLVSLLSNNLNKFDEGLALAHFVWIAPLQVMLLMGLLWELLQASAFCGLGFLIVLALFQSGLGRMMMKYRDQRAGKINERLVITSEMIENIQSVKAYCWEEAMEKMIENLRQTELKLTRKAAYVRYFNSSAFFFSGFFVVFLSVLPYALIKGIILRKIFTTISFCIVLRMAVTRQFPWAVQTWYDSLGAINKIQDFLQKQEYKTLEYNLTTTEVVMENVTAFWEEGFGELFEKAKQNSDNRKISNGDNSLFFSNLALLGTPVLKDISFKIERGQLLAVAGSTGAGKTSLLMMIMGELEPSEGKIKHSGRISFCSQFSWIMPGTIKENIIFGVSYDEYRYRSVIKACQLEEDIAKFAEKDNIVLGEGGITLSGGQRARISLARAVYKDADLYLLDSPFGYLDVLTEKEIFESCVCKLMANKTRILVTSKMEHLKKADKILILHEGSSYFYGTFSELQNLRPDFSSKLMGYDSFDQFSAERRNSILTETLRRFSLEGDAAVSWNETKKQSFKQTGEIGEKRKNSILNSINSLRKFSVVQKTPLQMSGIEEDPDEPSERRLSLVPDSEQGEAILPRSNVINTGPTFQGRRRQSVLNLMTHSVNQGQNIHRINAASTRKMSIAPPANLTEMDIYSRRLSQESSLEISEEINEEDLKECFFDDAENIPAVTTWNTYLRYITVHKSLIFVLIWCLVIFLAEVAVSLVLLWLLGNAPAYNKGNSTISANSSYAVIITSTSAYYVFYIYVGVADTLLALGFFRGLPLVHTLITVSKILHHKMLHSVLQAPMSTLNALKAGGILNRFSKDIAILDDLLPLTIFDFIQLLLIVIGAVAVVSVLQPYIFLATVPVIVTFIILRAYFLHTSQQLKQLESEGRSPIFTHLVTSLKGLWTLRAFGRQPYFETLFHKALNLHTANWFLYLSTLRWFQMRIEMVFVIFFIVVTFISILTTGEGEGQVGIILTLAMNIMGTLQWAVNSSIDVDSLMRSVSRVFKFIDMPTEEGKSTRSIKPSKDCHLSKVMVFENPHVKKDDIWPSGGQMTVKDLTARYLDGGNAILENISFSISPGQRVGLLGRTGSGKSTLLSAFLRLLNTEGEIQIDGVSWDSITLQQWRKAFGVIPQKVFIFSGTFRKNLDPYEQWSDQEIWKVADEVGLRSVIEQFPGKLDFVLVDGGYVLSHGHKQLMCLARSVLSKAKILLLDEPSAHLDPITYQIIRRTLKQAFADCTVILCEHRIEAMLECQRFLVIEENNVRQYDSIQKLLSEKSLFRQAISPSDRMKLFPRRNSSKHKSRPPITALKEETEEEVQDTRL</sequence>
<dbReference type="EC" id="5.6.1.6" evidence="1"/>
<dbReference type="EMBL" id="DP000022">
    <property type="protein sequence ID" value="ABB89826.1"/>
    <property type="molecule type" value="Genomic_DNA"/>
</dbReference>
<dbReference type="RefSeq" id="XP_012616557.1">
    <property type="nucleotide sequence ID" value="XM_012761103.1"/>
</dbReference>
<dbReference type="SMR" id="Q2QL83"/>
<dbReference type="GlyCosmos" id="Q2QL83">
    <property type="glycosylation" value="2 sites, No reported glycans"/>
</dbReference>
<dbReference type="Ensembl" id="ENSMICT00000063420.1">
    <property type="protein sequence ID" value="ENSMICP00000045018.1"/>
    <property type="gene ID" value="ENSMICG00000046039.1"/>
</dbReference>
<dbReference type="GeneID" id="105869370"/>
<dbReference type="KEGG" id="mmur:105869370"/>
<dbReference type="CTD" id="1080"/>
<dbReference type="GeneTree" id="ENSGT00940000158567"/>
<dbReference type="OrthoDB" id="6500128at2759"/>
<dbReference type="Proteomes" id="UP000694394">
    <property type="component" value="Chromosome 11"/>
</dbReference>
<dbReference type="GO" id="GO:0016324">
    <property type="term" value="C:apical plasma membrane"/>
    <property type="evidence" value="ECO:0000250"/>
    <property type="project" value="UniProtKB"/>
</dbReference>
<dbReference type="GO" id="GO:0009986">
    <property type="term" value="C:cell surface"/>
    <property type="evidence" value="ECO:0007669"/>
    <property type="project" value="Ensembl"/>
</dbReference>
<dbReference type="GO" id="GO:0034707">
    <property type="term" value="C:chloride channel complex"/>
    <property type="evidence" value="ECO:0007669"/>
    <property type="project" value="UniProtKB-KW"/>
</dbReference>
<dbReference type="GO" id="GO:0005829">
    <property type="term" value="C:cytosol"/>
    <property type="evidence" value="ECO:0007669"/>
    <property type="project" value="Ensembl"/>
</dbReference>
<dbReference type="GO" id="GO:0005769">
    <property type="term" value="C:early endosome"/>
    <property type="evidence" value="ECO:0000250"/>
    <property type="project" value="UniProtKB"/>
</dbReference>
<dbReference type="GO" id="GO:0031901">
    <property type="term" value="C:early endosome membrane"/>
    <property type="evidence" value="ECO:0007669"/>
    <property type="project" value="UniProtKB-SubCell"/>
</dbReference>
<dbReference type="GO" id="GO:0005789">
    <property type="term" value="C:endoplasmic reticulum membrane"/>
    <property type="evidence" value="ECO:0000250"/>
    <property type="project" value="UniProtKB"/>
</dbReference>
<dbReference type="GO" id="GO:0016020">
    <property type="term" value="C:membrane"/>
    <property type="evidence" value="ECO:0000250"/>
    <property type="project" value="UniProtKB"/>
</dbReference>
<dbReference type="GO" id="GO:0005634">
    <property type="term" value="C:nucleus"/>
    <property type="evidence" value="ECO:0000250"/>
    <property type="project" value="UniProtKB"/>
</dbReference>
<dbReference type="GO" id="GO:0005886">
    <property type="term" value="C:plasma membrane"/>
    <property type="evidence" value="ECO:0000250"/>
    <property type="project" value="UniProtKB"/>
</dbReference>
<dbReference type="GO" id="GO:0055038">
    <property type="term" value="C:recycling endosome membrane"/>
    <property type="evidence" value="ECO:0007669"/>
    <property type="project" value="UniProtKB-SubCell"/>
</dbReference>
<dbReference type="GO" id="GO:0071889">
    <property type="term" value="F:14-3-3 protein binding"/>
    <property type="evidence" value="ECO:0007669"/>
    <property type="project" value="Ensembl"/>
</dbReference>
<dbReference type="GO" id="GO:0140359">
    <property type="term" value="F:ABC-type transporter activity"/>
    <property type="evidence" value="ECO:0007669"/>
    <property type="project" value="InterPro"/>
</dbReference>
<dbReference type="GO" id="GO:0005524">
    <property type="term" value="F:ATP binding"/>
    <property type="evidence" value="ECO:0007669"/>
    <property type="project" value="UniProtKB-KW"/>
</dbReference>
<dbReference type="GO" id="GO:0016887">
    <property type="term" value="F:ATP hydrolysis activity"/>
    <property type="evidence" value="ECO:0000250"/>
    <property type="project" value="UniProtKB"/>
</dbReference>
<dbReference type="GO" id="GO:0015106">
    <property type="term" value="F:bicarbonate transmembrane transporter activity"/>
    <property type="evidence" value="ECO:0000250"/>
    <property type="project" value="UniProtKB"/>
</dbReference>
<dbReference type="GO" id="GO:0005254">
    <property type="term" value="F:chloride channel activity"/>
    <property type="evidence" value="ECO:0000250"/>
    <property type="project" value="UniProtKB"/>
</dbReference>
<dbReference type="GO" id="GO:0019869">
    <property type="term" value="F:chloride channel inhibitor activity"/>
    <property type="evidence" value="ECO:0000250"/>
    <property type="project" value="UniProtKB"/>
</dbReference>
<dbReference type="GO" id="GO:0015108">
    <property type="term" value="F:chloride transmembrane transporter activity"/>
    <property type="evidence" value="ECO:0000250"/>
    <property type="project" value="UniProtKB"/>
</dbReference>
<dbReference type="GO" id="GO:0019899">
    <property type="term" value="F:enzyme binding"/>
    <property type="evidence" value="ECO:0007669"/>
    <property type="project" value="Ensembl"/>
</dbReference>
<dbReference type="GO" id="GO:0005260">
    <property type="term" value="F:intracellularly ATP-gated chloride channel activity"/>
    <property type="evidence" value="ECO:0000250"/>
    <property type="project" value="UniProtKB"/>
</dbReference>
<dbReference type="GO" id="GO:0030165">
    <property type="term" value="F:PDZ domain binding"/>
    <property type="evidence" value="ECO:0007669"/>
    <property type="project" value="Ensembl"/>
</dbReference>
<dbReference type="GO" id="GO:0051087">
    <property type="term" value="F:protein-folding chaperone binding"/>
    <property type="evidence" value="ECO:0007669"/>
    <property type="project" value="Ensembl"/>
</dbReference>
<dbReference type="GO" id="GO:0106138">
    <property type="term" value="F:Sec61 translocon complex binding"/>
    <property type="evidence" value="ECO:0007669"/>
    <property type="project" value="Ensembl"/>
</dbReference>
<dbReference type="GO" id="GO:0097186">
    <property type="term" value="P:amelogenesis"/>
    <property type="evidence" value="ECO:0007669"/>
    <property type="project" value="Ensembl"/>
</dbReference>
<dbReference type="GO" id="GO:0015701">
    <property type="term" value="P:bicarbonate transport"/>
    <property type="evidence" value="ECO:0000250"/>
    <property type="project" value="UniProtKB"/>
</dbReference>
<dbReference type="GO" id="GO:0071320">
    <property type="term" value="P:cellular response to cAMP"/>
    <property type="evidence" value="ECO:0000250"/>
    <property type="project" value="UniProtKB"/>
</dbReference>
<dbReference type="GO" id="GO:1904322">
    <property type="term" value="P:cellular response to forskolin"/>
    <property type="evidence" value="ECO:0000250"/>
    <property type="project" value="UniProtKB"/>
</dbReference>
<dbReference type="GO" id="GO:1902476">
    <property type="term" value="P:chloride transmembrane transport"/>
    <property type="evidence" value="ECO:0000250"/>
    <property type="project" value="UniProtKB"/>
</dbReference>
<dbReference type="GO" id="GO:0006695">
    <property type="term" value="P:cholesterol biosynthetic process"/>
    <property type="evidence" value="ECO:0007669"/>
    <property type="project" value="Ensembl"/>
</dbReference>
<dbReference type="GO" id="GO:0030301">
    <property type="term" value="P:cholesterol transport"/>
    <property type="evidence" value="ECO:0007669"/>
    <property type="project" value="Ensembl"/>
</dbReference>
<dbReference type="GO" id="GO:0051649">
    <property type="term" value="P:establishment of localization in cell"/>
    <property type="evidence" value="ECO:0007669"/>
    <property type="project" value="Ensembl"/>
</dbReference>
<dbReference type="GO" id="GO:0051454">
    <property type="term" value="P:intracellular pH elevation"/>
    <property type="evidence" value="ECO:0000250"/>
    <property type="project" value="UniProtKB"/>
</dbReference>
<dbReference type="GO" id="GO:0060081">
    <property type="term" value="P:membrane hyperpolarization"/>
    <property type="evidence" value="ECO:0000250"/>
    <property type="project" value="UniProtKB"/>
</dbReference>
<dbReference type="GO" id="GO:0050891">
    <property type="term" value="P:multicellular organismal-level water homeostasis"/>
    <property type="evidence" value="ECO:0000250"/>
    <property type="project" value="UniProtKB"/>
</dbReference>
<dbReference type="GO" id="GO:0070175">
    <property type="term" value="P:positive regulation of enamel mineralization"/>
    <property type="evidence" value="ECO:0007669"/>
    <property type="project" value="Ensembl"/>
</dbReference>
<dbReference type="GO" id="GO:0045921">
    <property type="term" value="P:positive regulation of exocytosis"/>
    <property type="evidence" value="ECO:0007669"/>
    <property type="project" value="Ensembl"/>
</dbReference>
<dbReference type="GO" id="GO:0035774">
    <property type="term" value="P:positive regulation of insulin secretion involved in cellular response to glucose stimulus"/>
    <property type="evidence" value="ECO:0007669"/>
    <property type="project" value="Ensembl"/>
</dbReference>
<dbReference type="GO" id="GO:0034976">
    <property type="term" value="P:response to endoplasmic reticulum stress"/>
    <property type="evidence" value="ECO:0000250"/>
    <property type="project" value="UniProtKB"/>
</dbReference>
<dbReference type="GO" id="GO:0048240">
    <property type="term" value="P:sperm capacitation"/>
    <property type="evidence" value="ECO:0000250"/>
    <property type="project" value="UniProtKB"/>
</dbReference>
<dbReference type="GO" id="GO:0035377">
    <property type="term" value="P:transepithelial water transport"/>
    <property type="evidence" value="ECO:0000250"/>
    <property type="project" value="UniProtKB"/>
</dbReference>
<dbReference type="GO" id="GO:0006904">
    <property type="term" value="P:vesicle docking involved in exocytosis"/>
    <property type="evidence" value="ECO:0007669"/>
    <property type="project" value="Ensembl"/>
</dbReference>
<dbReference type="CDD" id="cd18594">
    <property type="entry name" value="ABC_6TM_CFTR_D1"/>
    <property type="match status" value="1"/>
</dbReference>
<dbReference type="CDD" id="cd18600">
    <property type="entry name" value="ABC_6TM_CFTR_D2"/>
    <property type="match status" value="1"/>
</dbReference>
<dbReference type="CDD" id="cd03291">
    <property type="entry name" value="ABCC_CFTR1"/>
    <property type="match status" value="1"/>
</dbReference>
<dbReference type="CDD" id="cd03289">
    <property type="entry name" value="ABCC_CFTR2"/>
    <property type="match status" value="1"/>
</dbReference>
<dbReference type="FunFam" id="1.20.1560.10:FF:000017">
    <property type="entry name" value="Cystic fibrosis transmembrane conductance regulator"/>
    <property type="match status" value="1"/>
</dbReference>
<dbReference type="FunFam" id="1.20.1560.10:FF:000019">
    <property type="entry name" value="Cystic fibrosis transmembrane conductance regulator"/>
    <property type="match status" value="1"/>
</dbReference>
<dbReference type="FunFam" id="3.40.50.300:FF:000581">
    <property type="entry name" value="Cystic fibrosis transmembrane conductance regulator"/>
    <property type="match status" value="1"/>
</dbReference>
<dbReference type="FunFam" id="3.40.50.300:FF:000591">
    <property type="entry name" value="Cystic fibrosis transmembrane conductance regulator"/>
    <property type="match status" value="1"/>
</dbReference>
<dbReference type="Gene3D" id="1.20.1560.10">
    <property type="entry name" value="ABC transporter type 1, transmembrane domain"/>
    <property type="match status" value="2"/>
</dbReference>
<dbReference type="Gene3D" id="3.40.50.300">
    <property type="entry name" value="P-loop containing nucleotide triphosphate hydrolases"/>
    <property type="match status" value="2"/>
</dbReference>
<dbReference type="InterPro" id="IPR003593">
    <property type="entry name" value="AAA+_ATPase"/>
</dbReference>
<dbReference type="InterPro" id="IPR011527">
    <property type="entry name" value="ABC1_TM_dom"/>
</dbReference>
<dbReference type="InterPro" id="IPR036640">
    <property type="entry name" value="ABC1_TM_sf"/>
</dbReference>
<dbReference type="InterPro" id="IPR003439">
    <property type="entry name" value="ABC_transporter-like_ATP-bd"/>
</dbReference>
<dbReference type="InterPro" id="IPR017871">
    <property type="entry name" value="ABC_transporter-like_CS"/>
</dbReference>
<dbReference type="InterPro" id="IPR050173">
    <property type="entry name" value="ABC_transporter_C-like"/>
</dbReference>
<dbReference type="InterPro" id="IPR009147">
    <property type="entry name" value="CFTR/ABCC7"/>
</dbReference>
<dbReference type="InterPro" id="IPR047082">
    <property type="entry name" value="CFTR1_ATP-bd_dom1"/>
</dbReference>
<dbReference type="InterPro" id="IPR025837">
    <property type="entry name" value="CFTR_reg_dom"/>
</dbReference>
<dbReference type="InterPro" id="IPR027417">
    <property type="entry name" value="P-loop_NTPase"/>
</dbReference>
<dbReference type="NCBIfam" id="TIGR01271">
    <property type="entry name" value="CFTR_protein"/>
    <property type="match status" value="1"/>
</dbReference>
<dbReference type="PANTHER" id="PTHR24223">
    <property type="entry name" value="ATP-BINDING CASSETTE SUB-FAMILY C"/>
    <property type="match status" value="1"/>
</dbReference>
<dbReference type="PANTHER" id="PTHR24223:SF19">
    <property type="entry name" value="CYSTIC FIBROSIS TRANSMEMBRANE CONDUCTANCE REGULATOR"/>
    <property type="match status" value="1"/>
</dbReference>
<dbReference type="Pfam" id="PF00664">
    <property type="entry name" value="ABC_membrane"/>
    <property type="match status" value="2"/>
</dbReference>
<dbReference type="Pfam" id="PF00005">
    <property type="entry name" value="ABC_tran"/>
    <property type="match status" value="2"/>
</dbReference>
<dbReference type="Pfam" id="PF14396">
    <property type="entry name" value="CFTR_R"/>
    <property type="match status" value="1"/>
</dbReference>
<dbReference type="PRINTS" id="PR01851">
    <property type="entry name" value="CYSFIBREGLTR"/>
</dbReference>
<dbReference type="SMART" id="SM00382">
    <property type="entry name" value="AAA"/>
    <property type="match status" value="2"/>
</dbReference>
<dbReference type="SUPFAM" id="SSF90123">
    <property type="entry name" value="ABC transporter transmembrane region"/>
    <property type="match status" value="2"/>
</dbReference>
<dbReference type="SUPFAM" id="SSF52540">
    <property type="entry name" value="P-loop containing nucleoside triphosphate hydrolases"/>
    <property type="match status" value="2"/>
</dbReference>
<dbReference type="PROSITE" id="PS50929">
    <property type="entry name" value="ABC_TM1F"/>
    <property type="match status" value="2"/>
</dbReference>
<dbReference type="PROSITE" id="PS00211">
    <property type="entry name" value="ABC_TRANSPORTER_1"/>
    <property type="match status" value="1"/>
</dbReference>
<dbReference type="PROSITE" id="PS50893">
    <property type="entry name" value="ABC_TRANSPORTER_2"/>
    <property type="match status" value="2"/>
</dbReference>
<protein>
    <recommendedName>
        <fullName evidence="1">Cystic fibrosis transmembrane conductance regulator</fullName>
        <shortName>CFTR</shortName>
    </recommendedName>
    <alternativeName>
        <fullName>ATP-binding cassette sub-family C member 7</fullName>
    </alternativeName>
    <alternativeName>
        <fullName>Channel conductance-controlling ATPase</fullName>
        <ecNumber evidence="1">5.6.1.6</ecNumber>
    </alternativeName>
    <alternativeName>
        <fullName>cAMP-dependent chloride channel</fullName>
    </alternativeName>
</protein>
<gene>
    <name evidence="1" type="primary">CFTR</name>
    <name type="synonym">ABCC7</name>
</gene>
<accession>Q2QL83</accession>
<evidence type="ECO:0000250" key="1">
    <source>
        <dbReference type="UniProtKB" id="P13569"/>
    </source>
</evidence>
<evidence type="ECO:0000250" key="2">
    <source>
        <dbReference type="UniProtKB" id="P26361"/>
    </source>
</evidence>
<evidence type="ECO:0000250" key="3">
    <source>
        <dbReference type="UniProtKB" id="P34158"/>
    </source>
</evidence>
<evidence type="ECO:0000255" key="4"/>
<evidence type="ECO:0000255" key="5">
    <source>
        <dbReference type="PROSITE-ProRule" id="PRU00434"/>
    </source>
</evidence>
<evidence type="ECO:0000255" key="6">
    <source>
        <dbReference type="PROSITE-ProRule" id="PRU00441"/>
    </source>
</evidence>
<evidence type="ECO:0000256" key="7">
    <source>
        <dbReference type="SAM" id="MobiDB-lite"/>
    </source>
</evidence>
<evidence type="ECO:0000305" key="8"/>
<proteinExistence type="inferred from homology"/>
<comment type="function">
    <text evidence="1 2">Epithelial ion channel that plays an important role in the regulation of epithelial ion and water transport and fluid homeostasis. Mediates the transport of chloride ions across the cell membrane (By similarity). Possesses an intrinsic ATPase activity and utilizes ATP to gate its channel; the passive flow of anions through the channel is gated by cycles of ATP binding and hydrolysis by the ATP-binding domains (By similarity). The ion channel is also permeable to HCO(3)(-); selectivity depends on the extracellular chloride concentration. Exerts its function also by modulating the activity of other ion channels and transporters. Contributes to the regulation of the pH and the ion content of the epithelial fluid layer. Modulates the activity of the epithelial sodium channel (ENaC) complex, in part by regulating the cell surface expression of the ENaC complex. May regulate bicarbonate secretion and salvage in epithelial cells by regulating the transporter SLC4A7. Can inhibit the chloride channel activity of ANO1 (By similarity). Plays a role in the chloride and bicarbonate homeostasis during sperm epididymal maturation and capacitation (By similarity).</text>
</comment>
<comment type="catalytic activity">
    <reaction evidence="1">
        <text>ATP + H2O + closed Cl(-) channel = ADP + phosphate + open Cl(-) channel.</text>
        <dbReference type="EC" id="5.6.1.6"/>
    </reaction>
</comment>
<comment type="catalytic activity">
    <reaction evidence="1">
        <text>chloride(in) = chloride(out)</text>
        <dbReference type="Rhea" id="RHEA:29823"/>
        <dbReference type="ChEBI" id="CHEBI:17996"/>
    </reaction>
</comment>
<comment type="catalytic activity">
    <reaction evidence="1">
        <text>hydrogencarbonate(in) = hydrogencarbonate(out)</text>
        <dbReference type="Rhea" id="RHEA:28695"/>
        <dbReference type="ChEBI" id="CHEBI:17544"/>
    </reaction>
</comment>
<comment type="catalytic activity">
    <reaction evidence="1">
        <text>ATP + H2O = ADP + phosphate + H(+)</text>
        <dbReference type="Rhea" id="RHEA:13065"/>
        <dbReference type="ChEBI" id="CHEBI:15377"/>
        <dbReference type="ChEBI" id="CHEBI:15378"/>
        <dbReference type="ChEBI" id="CHEBI:30616"/>
        <dbReference type="ChEBI" id="CHEBI:43474"/>
        <dbReference type="ChEBI" id="CHEBI:456216"/>
    </reaction>
    <physiologicalReaction direction="left-to-right" evidence="1">
        <dbReference type="Rhea" id="RHEA:13066"/>
    </physiologicalReaction>
</comment>
<comment type="subunit">
    <text evidence="1 2 3">Monomer; does not require oligomerization for channel activity. May form oligomers in the membrane (By similarity). Interacts with SLC26A3, SLC26A6 and NHERF1 (By similarity). Interacts with SHANK2 (By similarity). Interacts with MYO6 (By similarity). Interacts (via C-terminus) with GOPC (via PDZ domain); this promotes CFTR internalization and thereby decreases channel activity. Interacts with SLC4A7 through NHERF1. Found in a complex with MYO5B and RAB11A. Interacts with ANO1. Interacts with SLC26A8 (By similarity). Interacts with AHCYL1; the interaction increases CFTR activity (By similarity). Interacts with CSE1L (By similarity). The core-glycosylated form interacts with GORASP2 (via PDZ GRASP-type 1 domain) in respone to ER stress (By similarity). Interacts with MARCHF2; the interaction leads to CFTR ubiqtuitination and degradation (By similarity). Interacts with ADGRG2 (By similarity).</text>
</comment>
<comment type="subcellular location">
    <subcellularLocation>
        <location evidence="2">Apical cell membrane</location>
        <topology evidence="1">Multi-pass membrane protein</topology>
    </subcellularLocation>
    <subcellularLocation>
        <location evidence="1">Early endosome membrane</location>
        <topology evidence="1">Multi-pass membrane protein</topology>
    </subcellularLocation>
    <subcellularLocation>
        <location evidence="2">Cell membrane</location>
        <topology evidence="1">Multi-pass membrane protein</topology>
    </subcellularLocation>
    <subcellularLocation>
        <location evidence="1">Recycling endosome membrane</location>
        <topology evidence="1">Multi-pass membrane protein</topology>
    </subcellularLocation>
    <subcellularLocation>
        <location evidence="1">Endoplasmic reticulum membrane</location>
        <topology evidence="1">Multi-pass membrane protein</topology>
    </subcellularLocation>
    <subcellularLocation>
        <location evidence="3">Nucleus</location>
    </subcellularLocation>
    <text evidence="1 3">The channel is internalized from the cell surface into an endosomal recycling compartment, from where it is recycled to the cell membrane. In the oviduct and bronchus, detected on the apical side of epithelial cells, but not associated with cilia. In Sertoli cells, a processed product is detected in the nucleus. ER stress induces GORASP2-mediated unconventional (ER/Golgi-independent) trafficking of core-glycosylated CFTR to cell membrane.</text>
</comment>
<comment type="domain">
    <text evidence="1 2">Binds and hydrolyzes ATP via the two cytoplasmic ABC transporter nucleotide-binding domains. The two ATP-binding domains interact with each other, forming a head-to-tail dimer. Normal ATPase activity requires interaction between the two domains. The first ABC transporter nucleotide-binding domain has no ATPase activity by itself.</text>
</comment>
<comment type="domain">
    <text evidence="1">The PDZ-binding motif mediates interactions with GOPC and with the SLC4A7, NHERF1/EBP50 complex.</text>
</comment>
<comment type="domain">
    <text evidence="1">The disordered R region mediates channel activation when it is phosphorylated, but not in the absence of phosphorylation.</text>
</comment>
<comment type="PTM">
    <text evidence="1">N-glycosylated.</text>
</comment>
<comment type="PTM">
    <text evidence="1">Phosphorylated; cAMP treatment promotes phosphorylation and activates the channel. Dephosphorylation decreases the ATPase activity (in vitro). Phosphorylation at PKA sites activates the channel. Phosphorylation at PKC sites enhances the response to phosphorylation by PKA. Phosphorylated by AMPK; this inhibits channel activity.</text>
</comment>
<comment type="PTM">
    <text evidence="1">Ubiquitinated, leading to its degradation in the lysosome. Deubiquitination by USP10 in early endosomes enhances its endocytic recycling to the cell membrane. Ubiquitinated by RNF185 during ER stress. Ubiquitinated by MARCHF2 (By similarity).</text>
</comment>
<comment type="similarity">
    <text evidence="8">Belongs to the ABC transporter superfamily. ABCC family. CFTR transporter (TC 3.A.1.202) subfamily.</text>
</comment>
<feature type="chain" id="PRO_0000226367" description="Cystic fibrosis transmembrane conductance regulator">
    <location>
        <begin position="1"/>
        <end position="1481"/>
    </location>
</feature>
<feature type="topological domain" description="Cytoplasmic" evidence="1">
    <location>
        <begin position="1"/>
        <end position="77"/>
    </location>
</feature>
<feature type="transmembrane region" description="Helical; Name=1" evidence="1">
    <location>
        <begin position="78"/>
        <end position="98"/>
    </location>
</feature>
<feature type="topological domain" description="Extracellular" evidence="1">
    <location>
        <begin position="99"/>
        <end position="122"/>
    </location>
</feature>
<feature type="transmembrane region" description="Helical; Name=2" evidence="1">
    <location>
        <begin position="123"/>
        <end position="146"/>
    </location>
</feature>
<feature type="topological domain" description="Cytoplasmic" evidence="1">
    <location>
        <begin position="147"/>
        <end position="195"/>
    </location>
</feature>
<feature type="transmembrane region" description="Helical; Name=3" evidence="1">
    <location>
        <begin position="196"/>
        <end position="216"/>
    </location>
</feature>
<feature type="topological domain" description="Extracellular" evidence="1">
    <location>
        <begin position="217"/>
        <end position="222"/>
    </location>
</feature>
<feature type="transmembrane region" description="Helical; Name=4" evidence="1">
    <location>
        <begin position="223"/>
        <end position="243"/>
    </location>
</feature>
<feature type="topological domain" description="Cytoplasmic" evidence="1">
    <location>
        <begin position="244"/>
        <end position="298"/>
    </location>
</feature>
<feature type="transmembrane region" description="Helical; Name=5" evidence="1">
    <location>
        <begin position="299"/>
        <end position="319"/>
    </location>
</feature>
<feature type="topological domain" description="Extracellular" evidence="1">
    <location>
        <begin position="320"/>
        <end position="339"/>
    </location>
</feature>
<feature type="transmembrane region" description="Helical; Name=6" evidence="1">
    <location>
        <begin position="340"/>
        <end position="358"/>
    </location>
</feature>
<feature type="topological domain" description="Cytoplasmic" evidence="1">
    <location>
        <begin position="359"/>
        <end position="858"/>
    </location>
</feature>
<feature type="transmembrane region" description="Helical; Name=7" evidence="1">
    <location>
        <begin position="859"/>
        <end position="879"/>
    </location>
</feature>
<feature type="topological domain" description="Extracellular" evidence="1">
    <location>
        <begin position="880"/>
        <end position="918"/>
    </location>
</feature>
<feature type="transmembrane region" description="Discontinuously helical; Name=8" evidence="1">
    <location>
        <begin position="919"/>
        <end position="939"/>
    </location>
</feature>
<feature type="topological domain" description="Cytoplasmic" evidence="1">
    <location>
        <begin position="940"/>
        <end position="990"/>
    </location>
</feature>
<feature type="transmembrane region" description="Helical; Name=9" evidence="1">
    <location>
        <begin position="991"/>
        <end position="1011"/>
    </location>
</feature>
<feature type="topological domain" description="Extracellular" evidence="1">
    <location>
        <begin position="1012"/>
        <end position="1013"/>
    </location>
</feature>
<feature type="transmembrane region" description="Helical; Name=10" evidence="1">
    <location>
        <begin position="1014"/>
        <end position="1034"/>
    </location>
</feature>
<feature type="topological domain" description="Cytoplasmic" evidence="1">
    <location>
        <begin position="1035"/>
        <end position="1095"/>
    </location>
</feature>
<feature type="transmembrane region" description="Helical; Name=11" evidence="1">
    <location>
        <begin position="1096"/>
        <end position="1116"/>
    </location>
</feature>
<feature type="topological domain" description="Extracellular" evidence="1">
    <location>
        <begin position="1117"/>
        <end position="1130"/>
    </location>
</feature>
<feature type="transmembrane region" description="Helical; Name=12" evidence="1">
    <location>
        <begin position="1131"/>
        <end position="1151"/>
    </location>
</feature>
<feature type="topological domain" description="Cytoplasmic" evidence="1">
    <location>
        <begin position="1152"/>
        <end position="1481"/>
    </location>
</feature>
<feature type="domain" description="ABC transmembrane type-1 1" evidence="6">
    <location>
        <begin position="81"/>
        <end position="365"/>
    </location>
</feature>
<feature type="domain" description="ABC transporter 1" evidence="5">
    <location>
        <begin position="423"/>
        <end position="646"/>
    </location>
</feature>
<feature type="domain" description="ABC transmembrane type-1 2" evidence="6">
    <location>
        <begin position="859"/>
        <end position="1155"/>
    </location>
</feature>
<feature type="domain" description="ABC transporter 2" evidence="5">
    <location>
        <begin position="1211"/>
        <end position="1444"/>
    </location>
</feature>
<feature type="region of interest" description="Disordered R region" evidence="1">
    <location>
        <begin position="654"/>
        <end position="831"/>
    </location>
</feature>
<feature type="region of interest" description="Interaction with GORASP2" evidence="1">
    <location>
        <begin position="1387"/>
        <end position="1481"/>
    </location>
</feature>
<feature type="region of interest" description="Disordered" evidence="7">
    <location>
        <begin position="1449"/>
        <end position="1481"/>
    </location>
</feature>
<feature type="short sequence motif" description="PDZ-binding" evidence="1">
    <location>
        <begin position="1479"/>
        <end position="1481"/>
    </location>
</feature>
<feature type="compositionally biased region" description="Basic residues" evidence="7">
    <location>
        <begin position="1450"/>
        <end position="1462"/>
    </location>
</feature>
<feature type="compositionally biased region" description="Acidic residues" evidence="7">
    <location>
        <begin position="1471"/>
        <end position="1481"/>
    </location>
</feature>
<feature type="binding site" evidence="1">
    <location>
        <position position="401"/>
    </location>
    <ligand>
        <name>ATP</name>
        <dbReference type="ChEBI" id="CHEBI:30616"/>
        <label>1</label>
    </ligand>
</feature>
<feature type="binding site" evidence="5">
    <location>
        <begin position="458"/>
        <end position="465"/>
    </location>
    <ligand>
        <name>ATP</name>
        <dbReference type="ChEBI" id="CHEBI:30616"/>
        <label>1</label>
    </ligand>
</feature>
<feature type="binding site" evidence="2">
    <location>
        <position position="493"/>
    </location>
    <ligand>
        <name>ATP</name>
        <dbReference type="ChEBI" id="CHEBI:30616"/>
        <label>1</label>
    </ligand>
</feature>
<feature type="binding site" evidence="1">
    <location>
        <position position="1220"/>
    </location>
    <ligand>
        <name>ATP</name>
        <dbReference type="ChEBI" id="CHEBI:30616"/>
        <label>2</label>
    </ligand>
</feature>
<feature type="binding site" evidence="5">
    <location>
        <begin position="1245"/>
        <end position="1252"/>
    </location>
    <ligand>
        <name>ATP</name>
        <dbReference type="ChEBI" id="CHEBI:30616"/>
        <label>2</label>
    </ligand>
</feature>
<feature type="modified residue" description="Phosphoserine" evidence="1">
    <location>
        <position position="549"/>
    </location>
</feature>
<feature type="modified residue" description="Phosphoserine" evidence="1">
    <location>
        <position position="660"/>
    </location>
</feature>
<feature type="modified residue" description="Phosphoserine; by PKA" evidence="1">
    <location>
        <position position="670"/>
    </location>
</feature>
<feature type="modified residue" description="Phosphoserine" evidence="1">
    <location>
        <position position="686"/>
    </location>
</feature>
<feature type="modified residue" description="Phosphoserine" evidence="1">
    <location>
        <position position="700"/>
    </location>
</feature>
<feature type="modified residue" description="Phosphoserine" evidence="1">
    <location>
        <position position="712"/>
    </location>
</feature>
<feature type="modified residue" description="Phosphothreonine" evidence="1">
    <location>
        <position position="717"/>
    </location>
</feature>
<feature type="modified residue" description="Phosphoserine" evidence="1">
    <location>
        <position position="737"/>
    </location>
</feature>
<feature type="modified residue" description="Phosphoserine" evidence="1">
    <location>
        <position position="768"/>
    </location>
</feature>
<feature type="modified residue" description="Phosphoserine" evidence="1">
    <location>
        <position position="790"/>
    </location>
</feature>
<feature type="modified residue" description="Phosphoserine" evidence="1">
    <location>
        <position position="795"/>
    </location>
</feature>
<feature type="modified residue" description="Phosphoserine" evidence="1">
    <location>
        <position position="813"/>
    </location>
</feature>
<feature type="modified residue" description="Phosphoserine" evidence="1">
    <location>
        <position position="1445"/>
    </location>
</feature>
<feature type="modified residue" description="Phosphoserine" evidence="1">
    <location>
        <position position="1457"/>
    </location>
</feature>
<feature type="lipid moiety-binding region" description="S-palmitoyl cysteine" evidence="1">
    <location>
        <position position="524"/>
    </location>
</feature>
<feature type="lipid moiety-binding region" description="S-palmitoyl cysteine" evidence="1">
    <location>
        <position position="1396"/>
    </location>
</feature>
<feature type="glycosylation site" description="N-linked (GlcNAc...) asparagine" evidence="4">
    <location>
        <position position="894"/>
    </location>
</feature>
<feature type="glycosylation site" description="N-linked (GlcNAc...) asparagine" evidence="4">
    <location>
        <position position="900"/>
    </location>
</feature>
<feature type="cross-link" description="Glycyl lysine isopeptide (Lys-Gly) (interchain with G-Cter in ubiquitin)" evidence="1">
    <location>
        <position position="688"/>
    </location>
</feature>
<keyword id="KW-0067">ATP-binding</keyword>
<keyword id="KW-1003">Cell membrane</keyword>
<keyword id="KW-0868">Chloride</keyword>
<keyword id="KW-0869">Chloride channel</keyword>
<keyword id="KW-0256">Endoplasmic reticulum</keyword>
<keyword id="KW-0967">Endosome</keyword>
<keyword id="KW-0325">Glycoprotein</keyword>
<keyword id="KW-0407">Ion channel</keyword>
<keyword id="KW-0406">Ion transport</keyword>
<keyword id="KW-0413">Isomerase</keyword>
<keyword id="KW-1017">Isopeptide bond</keyword>
<keyword id="KW-0449">Lipoprotein</keyword>
<keyword id="KW-0472">Membrane</keyword>
<keyword id="KW-0547">Nucleotide-binding</keyword>
<keyword id="KW-0539">Nucleus</keyword>
<keyword id="KW-0564">Palmitate</keyword>
<keyword id="KW-0597">Phosphoprotein</keyword>
<keyword id="KW-1185">Reference proteome</keyword>
<keyword id="KW-0677">Repeat</keyword>
<keyword id="KW-0812">Transmembrane</keyword>
<keyword id="KW-1133">Transmembrane helix</keyword>
<keyword id="KW-0813">Transport</keyword>
<keyword id="KW-0832">Ubl conjugation</keyword>